<evidence type="ECO:0000255" key="1">
    <source>
        <dbReference type="HAMAP-Rule" id="MF_01227"/>
    </source>
</evidence>
<proteinExistence type="inferred from homology"/>
<reference key="1">
    <citation type="submission" date="2007-05" db="EMBL/GenBank/DDBJ databases">
        <title>Complete sequence of Pseudomonas putida F1.</title>
        <authorList>
            <consortium name="US DOE Joint Genome Institute"/>
            <person name="Copeland A."/>
            <person name="Lucas S."/>
            <person name="Lapidus A."/>
            <person name="Barry K."/>
            <person name="Detter J.C."/>
            <person name="Glavina del Rio T."/>
            <person name="Hammon N."/>
            <person name="Israni S."/>
            <person name="Dalin E."/>
            <person name="Tice H."/>
            <person name="Pitluck S."/>
            <person name="Chain P."/>
            <person name="Malfatti S."/>
            <person name="Shin M."/>
            <person name="Vergez L."/>
            <person name="Schmutz J."/>
            <person name="Larimer F."/>
            <person name="Land M."/>
            <person name="Hauser L."/>
            <person name="Kyrpides N."/>
            <person name="Lykidis A."/>
            <person name="Parales R."/>
            <person name="Richardson P."/>
        </authorList>
    </citation>
    <scope>NUCLEOTIDE SEQUENCE [LARGE SCALE GENOMIC DNA]</scope>
    <source>
        <strain>ATCC 700007 / DSM 6899 / JCM 31910 / BCRC 17059 / LMG 24140 / F1</strain>
    </source>
</reference>
<gene>
    <name evidence="1" type="primary">pyrG</name>
    <name type="ordered locus">Pput_4167</name>
</gene>
<feature type="chain" id="PRO_1000139535" description="CTP synthase">
    <location>
        <begin position="1"/>
        <end position="542"/>
    </location>
</feature>
<feature type="domain" description="Glutamine amidotransferase type-1" evidence="1">
    <location>
        <begin position="290"/>
        <end position="541"/>
    </location>
</feature>
<feature type="region of interest" description="Amidoligase domain" evidence="1">
    <location>
        <begin position="1"/>
        <end position="265"/>
    </location>
</feature>
<feature type="active site" description="Nucleophile; for glutamine hydrolysis" evidence="1">
    <location>
        <position position="378"/>
    </location>
</feature>
<feature type="active site" evidence="1">
    <location>
        <position position="514"/>
    </location>
</feature>
<feature type="active site" evidence="1">
    <location>
        <position position="516"/>
    </location>
</feature>
<feature type="binding site" evidence="1">
    <location>
        <position position="13"/>
    </location>
    <ligand>
        <name>CTP</name>
        <dbReference type="ChEBI" id="CHEBI:37563"/>
        <note>allosteric inhibitor</note>
    </ligand>
</feature>
<feature type="binding site" evidence="1">
    <location>
        <position position="13"/>
    </location>
    <ligand>
        <name>UTP</name>
        <dbReference type="ChEBI" id="CHEBI:46398"/>
    </ligand>
</feature>
<feature type="binding site" evidence="1">
    <location>
        <begin position="14"/>
        <end position="19"/>
    </location>
    <ligand>
        <name>ATP</name>
        <dbReference type="ChEBI" id="CHEBI:30616"/>
    </ligand>
</feature>
<feature type="binding site" evidence="1">
    <location>
        <position position="71"/>
    </location>
    <ligand>
        <name>ATP</name>
        <dbReference type="ChEBI" id="CHEBI:30616"/>
    </ligand>
</feature>
<feature type="binding site" evidence="1">
    <location>
        <position position="71"/>
    </location>
    <ligand>
        <name>Mg(2+)</name>
        <dbReference type="ChEBI" id="CHEBI:18420"/>
    </ligand>
</feature>
<feature type="binding site" evidence="1">
    <location>
        <position position="139"/>
    </location>
    <ligand>
        <name>Mg(2+)</name>
        <dbReference type="ChEBI" id="CHEBI:18420"/>
    </ligand>
</feature>
<feature type="binding site" evidence="1">
    <location>
        <begin position="146"/>
        <end position="148"/>
    </location>
    <ligand>
        <name>CTP</name>
        <dbReference type="ChEBI" id="CHEBI:37563"/>
        <note>allosteric inhibitor</note>
    </ligand>
</feature>
<feature type="binding site" evidence="1">
    <location>
        <begin position="186"/>
        <end position="191"/>
    </location>
    <ligand>
        <name>CTP</name>
        <dbReference type="ChEBI" id="CHEBI:37563"/>
        <note>allosteric inhibitor</note>
    </ligand>
</feature>
<feature type="binding site" evidence="1">
    <location>
        <begin position="186"/>
        <end position="191"/>
    </location>
    <ligand>
        <name>UTP</name>
        <dbReference type="ChEBI" id="CHEBI:46398"/>
    </ligand>
</feature>
<feature type="binding site" evidence="1">
    <location>
        <position position="222"/>
    </location>
    <ligand>
        <name>CTP</name>
        <dbReference type="ChEBI" id="CHEBI:37563"/>
        <note>allosteric inhibitor</note>
    </ligand>
</feature>
<feature type="binding site" evidence="1">
    <location>
        <position position="222"/>
    </location>
    <ligand>
        <name>UTP</name>
        <dbReference type="ChEBI" id="CHEBI:46398"/>
    </ligand>
</feature>
<feature type="binding site" evidence="1">
    <location>
        <position position="351"/>
    </location>
    <ligand>
        <name>L-glutamine</name>
        <dbReference type="ChEBI" id="CHEBI:58359"/>
    </ligand>
</feature>
<feature type="binding site" evidence="1">
    <location>
        <begin position="379"/>
        <end position="382"/>
    </location>
    <ligand>
        <name>L-glutamine</name>
        <dbReference type="ChEBI" id="CHEBI:58359"/>
    </ligand>
</feature>
<feature type="binding site" evidence="1">
    <location>
        <position position="402"/>
    </location>
    <ligand>
        <name>L-glutamine</name>
        <dbReference type="ChEBI" id="CHEBI:58359"/>
    </ligand>
</feature>
<feature type="binding site" evidence="1">
    <location>
        <position position="469"/>
    </location>
    <ligand>
        <name>L-glutamine</name>
        <dbReference type="ChEBI" id="CHEBI:58359"/>
    </ligand>
</feature>
<name>PYRG_PSEP1</name>
<protein>
    <recommendedName>
        <fullName evidence="1">CTP synthase</fullName>
        <ecNumber evidence="1">6.3.4.2</ecNumber>
    </recommendedName>
    <alternativeName>
        <fullName evidence="1">Cytidine 5'-triphosphate synthase</fullName>
    </alternativeName>
    <alternativeName>
        <fullName evidence="1">Cytidine triphosphate synthetase</fullName>
        <shortName evidence="1">CTP synthetase</shortName>
        <shortName evidence="1">CTPS</shortName>
    </alternativeName>
    <alternativeName>
        <fullName evidence="1">UTP--ammonia ligase</fullName>
    </alternativeName>
</protein>
<sequence>MTRYIFVTGGVVSSLGKGIASASLAAILEARGLKVTMLKLDPYINVDPGTMSPFQHGEVFVTHDGAETDLDLGHYERFIRTTMTQNNNFTTGRIYEHVLRKERRGDYLGATIQVIPHITDEIKRRIIKGAGDADVALVEIGGTVGDIESQPFLEAIRQLRVEVGSKRAMLMHLTLVPYIATAGETKTKPTQHSVKELRSIGLQPDVLICRSDHPVDASSRRKIALFTNVEERAVISLEDVDTIYKIPGVLHAQGLDDFVVERFGLQCNGADLSEWDKVVDAKLNPEHEVTIAMVGKYMELLDAYKSLIEAMSHAGITNRTKVNLRYIDSEDIENQGTSLLEGADAILVPGGFGLRGVEGKITAVQYARENKVPYLGICLGMQVAVIEFARNVMGWKDANSTEFDRNSGHPVVGLITEWADATGAVETRDEASDLGGTMRLGAQDCQLAAGSKVHDCYGKDVITERHRHRYEVNNNLLPQLVEAGLVVSGRSEDGALVEVVESKDHPWFVACQFHPEFTSTPRDGHPLFSGFVKAALAQKNKA</sequence>
<dbReference type="EC" id="6.3.4.2" evidence="1"/>
<dbReference type="EMBL" id="CP000712">
    <property type="protein sequence ID" value="ABQ80291.1"/>
    <property type="molecule type" value="Genomic_DNA"/>
</dbReference>
<dbReference type="SMR" id="A5W831"/>
<dbReference type="MEROPS" id="C26.964"/>
<dbReference type="KEGG" id="ppf:Pput_4167"/>
<dbReference type="eggNOG" id="COG0504">
    <property type="taxonomic scope" value="Bacteria"/>
</dbReference>
<dbReference type="HOGENOM" id="CLU_011675_5_0_6"/>
<dbReference type="UniPathway" id="UPA00159">
    <property type="reaction ID" value="UER00277"/>
</dbReference>
<dbReference type="GO" id="GO:0005829">
    <property type="term" value="C:cytosol"/>
    <property type="evidence" value="ECO:0007669"/>
    <property type="project" value="TreeGrafter"/>
</dbReference>
<dbReference type="GO" id="GO:0005524">
    <property type="term" value="F:ATP binding"/>
    <property type="evidence" value="ECO:0007669"/>
    <property type="project" value="UniProtKB-KW"/>
</dbReference>
<dbReference type="GO" id="GO:0003883">
    <property type="term" value="F:CTP synthase activity"/>
    <property type="evidence" value="ECO:0007669"/>
    <property type="project" value="UniProtKB-UniRule"/>
</dbReference>
<dbReference type="GO" id="GO:0004359">
    <property type="term" value="F:glutaminase activity"/>
    <property type="evidence" value="ECO:0007669"/>
    <property type="project" value="RHEA"/>
</dbReference>
<dbReference type="GO" id="GO:0042802">
    <property type="term" value="F:identical protein binding"/>
    <property type="evidence" value="ECO:0007669"/>
    <property type="project" value="TreeGrafter"/>
</dbReference>
<dbReference type="GO" id="GO:0046872">
    <property type="term" value="F:metal ion binding"/>
    <property type="evidence" value="ECO:0007669"/>
    <property type="project" value="UniProtKB-KW"/>
</dbReference>
<dbReference type="GO" id="GO:0044210">
    <property type="term" value="P:'de novo' CTP biosynthetic process"/>
    <property type="evidence" value="ECO:0007669"/>
    <property type="project" value="UniProtKB-UniRule"/>
</dbReference>
<dbReference type="GO" id="GO:0019856">
    <property type="term" value="P:pyrimidine nucleobase biosynthetic process"/>
    <property type="evidence" value="ECO:0007669"/>
    <property type="project" value="TreeGrafter"/>
</dbReference>
<dbReference type="CDD" id="cd03113">
    <property type="entry name" value="CTPS_N"/>
    <property type="match status" value="1"/>
</dbReference>
<dbReference type="CDD" id="cd01746">
    <property type="entry name" value="GATase1_CTP_Synthase"/>
    <property type="match status" value="1"/>
</dbReference>
<dbReference type="FunFam" id="3.40.50.300:FF:000009">
    <property type="entry name" value="CTP synthase"/>
    <property type="match status" value="1"/>
</dbReference>
<dbReference type="FunFam" id="3.40.50.880:FF:000002">
    <property type="entry name" value="CTP synthase"/>
    <property type="match status" value="1"/>
</dbReference>
<dbReference type="Gene3D" id="3.40.50.880">
    <property type="match status" value="1"/>
</dbReference>
<dbReference type="Gene3D" id="3.40.50.300">
    <property type="entry name" value="P-loop containing nucleotide triphosphate hydrolases"/>
    <property type="match status" value="1"/>
</dbReference>
<dbReference type="HAMAP" id="MF_01227">
    <property type="entry name" value="PyrG"/>
    <property type="match status" value="1"/>
</dbReference>
<dbReference type="InterPro" id="IPR029062">
    <property type="entry name" value="Class_I_gatase-like"/>
</dbReference>
<dbReference type="InterPro" id="IPR004468">
    <property type="entry name" value="CTP_synthase"/>
</dbReference>
<dbReference type="InterPro" id="IPR017456">
    <property type="entry name" value="CTP_synthase_N"/>
</dbReference>
<dbReference type="InterPro" id="IPR017926">
    <property type="entry name" value="GATASE"/>
</dbReference>
<dbReference type="InterPro" id="IPR033828">
    <property type="entry name" value="GATase1_CTP_Synthase"/>
</dbReference>
<dbReference type="InterPro" id="IPR027417">
    <property type="entry name" value="P-loop_NTPase"/>
</dbReference>
<dbReference type="NCBIfam" id="NF003792">
    <property type="entry name" value="PRK05380.1"/>
    <property type="match status" value="1"/>
</dbReference>
<dbReference type="NCBIfam" id="TIGR00337">
    <property type="entry name" value="PyrG"/>
    <property type="match status" value="1"/>
</dbReference>
<dbReference type="PANTHER" id="PTHR11550">
    <property type="entry name" value="CTP SYNTHASE"/>
    <property type="match status" value="1"/>
</dbReference>
<dbReference type="PANTHER" id="PTHR11550:SF0">
    <property type="entry name" value="CTP SYNTHASE-RELATED"/>
    <property type="match status" value="1"/>
</dbReference>
<dbReference type="Pfam" id="PF06418">
    <property type="entry name" value="CTP_synth_N"/>
    <property type="match status" value="1"/>
</dbReference>
<dbReference type="Pfam" id="PF00117">
    <property type="entry name" value="GATase"/>
    <property type="match status" value="1"/>
</dbReference>
<dbReference type="SUPFAM" id="SSF52317">
    <property type="entry name" value="Class I glutamine amidotransferase-like"/>
    <property type="match status" value="1"/>
</dbReference>
<dbReference type="SUPFAM" id="SSF52540">
    <property type="entry name" value="P-loop containing nucleoside triphosphate hydrolases"/>
    <property type="match status" value="1"/>
</dbReference>
<dbReference type="PROSITE" id="PS51273">
    <property type="entry name" value="GATASE_TYPE_1"/>
    <property type="match status" value="1"/>
</dbReference>
<keyword id="KW-0067">ATP-binding</keyword>
<keyword id="KW-0315">Glutamine amidotransferase</keyword>
<keyword id="KW-0436">Ligase</keyword>
<keyword id="KW-0460">Magnesium</keyword>
<keyword id="KW-0479">Metal-binding</keyword>
<keyword id="KW-0547">Nucleotide-binding</keyword>
<keyword id="KW-0665">Pyrimidine biosynthesis</keyword>
<comment type="function">
    <text evidence="1">Catalyzes the ATP-dependent amination of UTP to CTP with either L-glutamine or ammonia as the source of nitrogen. Regulates intracellular CTP levels through interactions with the four ribonucleotide triphosphates.</text>
</comment>
<comment type="catalytic activity">
    <reaction evidence="1">
        <text>UTP + L-glutamine + ATP + H2O = CTP + L-glutamate + ADP + phosphate + 2 H(+)</text>
        <dbReference type="Rhea" id="RHEA:26426"/>
        <dbReference type="ChEBI" id="CHEBI:15377"/>
        <dbReference type="ChEBI" id="CHEBI:15378"/>
        <dbReference type="ChEBI" id="CHEBI:29985"/>
        <dbReference type="ChEBI" id="CHEBI:30616"/>
        <dbReference type="ChEBI" id="CHEBI:37563"/>
        <dbReference type="ChEBI" id="CHEBI:43474"/>
        <dbReference type="ChEBI" id="CHEBI:46398"/>
        <dbReference type="ChEBI" id="CHEBI:58359"/>
        <dbReference type="ChEBI" id="CHEBI:456216"/>
        <dbReference type="EC" id="6.3.4.2"/>
    </reaction>
</comment>
<comment type="catalytic activity">
    <reaction evidence="1">
        <text>L-glutamine + H2O = L-glutamate + NH4(+)</text>
        <dbReference type="Rhea" id="RHEA:15889"/>
        <dbReference type="ChEBI" id="CHEBI:15377"/>
        <dbReference type="ChEBI" id="CHEBI:28938"/>
        <dbReference type="ChEBI" id="CHEBI:29985"/>
        <dbReference type="ChEBI" id="CHEBI:58359"/>
    </reaction>
</comment>
<comment type="catalytic activity">
    <reaction evidence="1">
        <text>UTP + NH4(+) + ATP = CTP + ADP + phosphate + 2 H(+)</text>
        <dbReference type="Rhea" id="RHEA:16597"/>
        <dbReference type="ChEBI" id="CHEBI:15378"/>
        <dbReference type="ChEBI" id="CHEBI:28938"/>
        <dbReference type="ChEBI" id="CHEBI:30616"/>
        <dbReference type="ChEBI" id="CHEBI:37563"/>
        <dbReference type="ChEBI" id="CHEBI:43474"/>
        <dbReference type="ChEBI" id="CHEBI:46398"/>
        <dbReference type="ChEBI" id="CHEBI:456216"/>
    </reaction>
</comment>
<comment type="activity regulation">
    <text evidence="1">Allosterically activated by GTP, when glutamine is the substrate; GTP has no effect on the reaction when ammonia is the substrate. The allosteric effector GTP functions by stabilizing the protein conformation that binds the tetrahedral intermediate(s) formed during glutamine hydrolysis. Inhibited by the product CTP, via allosteric rather than competitive inhibition.</text>
</comment>
<comment type="pathway">
    <text evidence="1">Pyrimidine metabolism; CTP biosynthesis via de novo pathway; CTP from UDP: step 2/2.</text>
</comment>
<comment type="subunit">
    <text evidence="1">Homotetramer.</text>
</comment>
<comment type="miscellaneous">
    <text evidence="1">CTPSs have evolved a hybrid strategy for distinguishing between UTP and CTP. The overlapping regions of the product feedback inhibitory and substrate sites recognize a common feature in both compounds, the triphosphate moiety. To differentiate isosteric substrate and product pyrimidine rings, an additional pocket far from the expected kinase/ligase catalytic site, specifically recognizes the cytosine and ribose portions of the product inhibitor.</text>
</comment>
<comment type="similarity">
    <text evidence="1">Belongs to the CTP synthase family.</text>
</comment>
<accession>A5W831</accession>
<organism>
    <name type="scientific">Pseudomonas putida (strain ATCC 700007 / DSM 6899 / JCM 31910 / BCRC 17059 / LMG 24140 / F1)</name>
    <dbReference type="NCBI Taxonomy" id="351746"/>
    <lineage>
        <taxon>Bacteria</taxon>
        <taxon>Pseudomonadati</taxon>
        <taxon>Pseudomonadota</taxon>
        <taxon>Gammaproteobacteria</taxon>
        <taxon>Pseudomonadales</taxon>
        <taxon>Pseudomonadaceae</taxon>
        <taxon>Pseudomonas</taxon>
    </lineage>
</organism>